<evidence type="ECO:0000250" key="1"/>
<evidence type="ECO:0000250" key="2">
    <source>
        <dbReference type="UniProtKB" id="P23321"/>
    </source>
</evidence>
<evidence type="ECO:0000305" key="3"/>
<comment type="function">
    <text evidence="2">Stabilizes the manganese cluster which is the primary site of water splitting.</text>
</comment>
<comment type="subcellular location">
    <subcellularLocation>
        <location evidence="1">Plastid</location>
        <location evidence="1">Chloroplast thylakoid membrane</location>
    </subcellularLocation>
    <text evidence="1">Associated with the photosystem II complex.</text>
</comment>
<comment type="similarity">
    <text evidence="3">Belongs to the PsbO family.</text>
</comment>
<organism>
    <name type="scientific">Brassica campestris</name>
    <name type="common">Field mustard</name>
    <dbReference type="NCBI Taxonomy" id="3711"/>
    <lineage>
        <taxon>Eukaryota</taxon>
        <taxon>Viridiplantae</taxon>
        <taxon>Streptophyta</taxon>
        <taxon>Embryophyta</taxon>
        <taxon>Tracheophyta</taxon>
        <taxon>Spermatophyta</taxon>
        <taxon>Magnoliopsida</taxon>
        <taxon>eudicotyledons</taxon>
        <taxon>Gunneridae</taxon>
        <taxon>Pentapetalae</taxon>
        <taxon>rosids</taxon>
        <taxon>malvids</taxon>
        <taxon>Brassicales</taxon>
        <taxon>Brassicaceae</taxon>
        <taxon>Brassiceae</taxon>
        <taxon>Brassica</taxon>
    </lineage>
</organism>
<proteinExistence type="evidence at protein level"/>
<dbReference type="SMR" id="P83504"/>
<dbReference type="Proteomes" id="UP000011750">
    <property type="component" value="Unplaced"/>
</dbReference>
<dbReference type="GO" id="GO:0009535">
    <property type="term" value="C:chloroplast thylakoid membrane"/>
    <property type="evidence" value="ECO:0007669"/>
    <property type="project" value="UniProtKB-SubCell"/>
</dbReference>
<dbReference type="GO" id="GO:0009654">
    <property type="term" value="C:photosystem II oxygen evolving complex"/>
    <property type="evidence" value="ECO:0007669"/>
    <property type="project" value="InterPro"/>
</dbReference>
<dbReference type="GO" id="GO:0010242">
    <property type="term" value="F:oxygen evolving activity"/>
    <property type="evidence" value="ECO:0007669"/>
    <property type="project" value="InterPro"/>
</dbReference>
<dbReference type="GO" id="GO:0010207">
    <property type="term" value="P:photosystem II assembly"/>
    <property type="evidence" value="ECO:0007669"/>
    <property type="project" value="InterPro"/>
</dbReference>
<dbReference type="GO" id="GO:0042549">
    <property type="term" value="P:photosystem II stabilization"/>
    <property type="evidence" value="ECO:0007669"/>
    <property type="project" value="InterPro"/>
</dbReference>
<dbReference type="InterPro" id="IPR002628">
    <property type="entry name" value="PsbO"/>
</dbReference>
<dbReference type="PANTHER" id="PTHR34058">
    <property type="entry name" value="OXYGEN-EVOLVING ENHANCER PROTEIN 1-2, CHLOROPLASTIC"/>
    <property type="match status" value="1"/>
</dbReference>
<name>PSBO_BRACM</name>
<sequence>EGAPKRLTYDEIQSKTYMEVKGTGTANQCPT</sequence>
<gene>
    <name type="primary">PSBO</name>
</gene>
<protein>
    <recommendedName>
        <fullName>Oxygen-evolving enhancer protein 1, chloroplastic</fullName>
        <shortName>OEE1</shortName>
    </recommendedName>
</protein>
<feature type="chain" id="PRO_0000203522" description="Oxygen-evolving enhancer protein 1, chloroplastic">
    <location>
        <begin position="1"/>
        <end position="31" status="greater than"/>
    </location>
</feature>
<feature type="non-terminal residue" evidence="3">
    <location>
        <position position="31"/>
    </location>
</feature>
<reference key="1">
    <citation type="journal article" date="2004" name="Plant Physiol. Biochem.">
        <title>Identification and differential accumulation of two isoforms of the CF1-beta subunit under high light stress in Brassica rapa.</title>
        <authorList>
            <person name="Jiao S."/>
            <person name="Hilaire E."/>
            <person name="Guikema J.A."/>
        </authorList>
    </citation>
    <scope>PROTEIN SEQUENCE</scope>
    <source>
        <tissue>Leaf mesophyll</tissue>
    </source>
</reference>
<keyword id="KW-0150">Chloroplast</keyword>
<keyword id="KW-0903">Direct protein sequencing</keyword>
<keyword id="KW-0464">Manganese</keyword>
<keyword id="KW-0472">Membrane</keyword>
<keyword id="KW-0602">Photosynthesis</keyword>
<keyword id="KW-0604">Photosystem II</keyword>
<keyword id="KW-0934">Plastid</keyword>
<keyword id="KW-1185">Reference proteome</keyword>
<keyword id="KW-0793">Thylakoid</keyword>
<accession>P83504</accession>